<comment type="function">
    <text evidence="1">Catalyzes the 2-thiolation of uridine at the wobble position (U34) of tRNA, leading to the formation of s(2)U34.</text>
</comment>
<comment type="catalytic activity">
    <reaction evidence="1">
        <text>S-sulfanyl-L-cysteinyl-[protein] + uridine(34) in tRNA + AH2 + ATP = 2-thiouridine(34) in tRNA + L-cysteinyl-[protein] + A + AMP + diphosphate + H(+)</text>
        <dbReference type="Rhea" id="RHEA:47032"/>
        <dbReference type="Rhea" id="RHEA-COMP:10131"/>
        <dbReference type="Rhea" id="RHEA-COMP:11726"/>
        <dbReference type="Rhea" id="RHEA-COMP:11727"/>
        <dbReference type="Rhea" id="RHEA-COMP:11728"/>
        <dbReference type="ChEBI" id="CHEBI:13193"/>
        <dbReference type="ChEBI" id="CHEBI:15378"/>
        <dbReference type="ChEBI" id="CHEBI:17499"/>
        <dbReference type="ChEBI" id="CHEBI:29950"/>
        <dbReference type="ChEBI" id="CHEBI:30616"/>
        <dbReference type="ChEBI" id="CHEBI:33019"/>
        <dbReference type="ChEBI" id="CHEBI:61963"/>
        <dbReference type="ChEBI" id="CHEBI:65315"/>
        <dbReference type="ChEBI" id="CHEBI:87170"/>
        <dbReference type="ChEBI" id="CHEBI:456215"/>
        <dbReference type="EC" id="2.8.1.13"/>
    </reaction>
</comment>
<comment type="subcellular location">
    <subcellularLocation>
        <location evidence="1">Cytoplasm</location>
    </subcellularLocation>
</comment>
<comment type="similarity">
    <text evidence="1">Belongs to the MnmA/TRMU family.</text>
</comment>
<gene>
    <name evidence="1" type="primary">mnmA</name>
    <name type="synonym">trmU</name>
    <name type="ordered locus">PST_2304</name>
</gene>
<keyword id="KW-0067">ATP-binding</keyword>
<keyword id="KW-0963">Cytoplasm</keyword>
<keyword id="KW-1015">Disulfide bond</keyword>
<keyword id="KW-0547">Nucleotide-binding</keyword>
<keyword id="KW-1185">Reference proteome</keyword>
<keyword id="KW-0694">RNA-binding</keyword>
<keyword id="KW-0808">Transferase</keyword>
<keyword id="KW-0819">tRNA processing</keyword>
<keyword id="KW-0820">tRNA-binding</keyword>
<accession>A4VLW2</accession>
<proteinExistence type="inferred from homology"/>
<reference key="1">
    <citation type="journal article" date="2008" name="Proc. Natl. Acad. Sci. U.S.A.">
        <title>Nitrogen fixation island and rhizosphere competence traits in the genome of root-associated Pseudomonas stutzeri A1501.</title>
        <authorList>
            <person name="Yan Y."/>
            <person name="Yang J."/>
            <person name="Dou Y."/>
            <person name="Chen M."/>
            <person name="Ping S."/>
            <person name="Peng J."/>
            <person name="Lu W."/>
            <person name="Zhang W."/>
            <person name="Yao Z."/>
            <person name="Li H."/>
            <person name="Liu W."/>
            <person name="He S."/>
            <person name="Geng L."/>
            <person name="Zhang X."/>
            <person name="Yang F."/>
            <person name="Yu H."/>
            <person name="Zhan Y."/>
            <person name="Li D."/>
            <person name="Lin Z."/>
            <person name="Wang Y."/>
            <person name="Elmerich C."/>
            <person name="Lin M."/>
            <person name="Jin Q."/>
        </authorList>
    </citation>
    <scope>NUCLEOTIDE SEQUENCE [LARGE SCALE GENOMIC DNA]</scope>
    <source>
        <strain>A1501</strain>
    </source>
</reference>
<organism>
    <name type="scientific">Stutzerimonas stutzeri (strain A1501)</name>
    <name type="common">Pseudomonas stutzeri</name>
    <dbReference type="NCBI Taxonomy" id="379731"/>
    <lineage>
        <taxon>Bacteria</taxon>
        <taxon>Pseudomonadati</taxon>
        <taxon>Pseudomonadota</taxon>
        <taxon>Gammaproteobacteria</taxon>
        <taxon>Pseudomonadales</taxon>
        <taxon>Pseudomonadaceae</taxon>
        <taxon>Stutzerimonas</taxon>
    </lineage>
</organism>
<feature type="chain" id="PRO_1000009559" description="tRNA-specific 2-thiouridylase MnmA">
    <location>
        <begin position="1"/>
        <end position="375"/>
    </location>
</feature>
<feature type="region of interest" description="Interaction with target base in tRNA" evidence="1">
    <location>
        <begin position="103"/>
        <end position="105"/>
    </location>
</feature>
<feature type="region of interest" description="Interaction with tRNA" evidence="1">
    <location>
        <begin position="154"/>
        <end position="156"/>
    </location>
</feature>
<feature type="region of interest" description="Interaction with tRNA" evidence="1">
    <location>
        <begin position="316"/>
        <end position="317"/>
    </location>
</feature>
<feature type="active site" description="Nucleophile" evidence="1">
    <location>
        <position position="108"/>
    </location>
</feature>
<feature type="active site" description="Cysteine persulfide intermediate" evidence="1">
    <location>
        <position position="204"/>
    </location>
</feature>
<feature type="binding site" evidence="1">
    <location>
        <begin position="17"/>
        <end position="24"/>
    </location>
    <ligand>
        <name>ATP</name>
        <dbReference type="ChEBI" id="CHEBI:30616"/>
    </ligand>
</feature>
<feature type="binding site" evidence="1">
    <location>
        <position position="43"/>
    </location>
    <ligand>
        <name>ATP</name>
        <dbReference type="ChEBI" id="CHEBI:30616"/>
    </ligand>
</feature>
<feature type="binding site" evidence="1">
    <location>
        <position position="132"/>
    </location>
    <ligand>
        <name>ATP</name>
        <dbReference type="ChEBI" id="CHEBI:30616"/>
    </ligand>
</feature>
<feature type="site" description="Interaction with tRNA" evidence="1">
    <location>
        <position position="133"/>
    </location>
</feature>
<feature type="site" description="Interaction with tRNA" evidence="1">
    <location>
        <position position="348"/>
    </location>
</feature>
<feature type="disulfide bond" description="Alternate" evidence="1">
    <location>
        <begin position="108"/>
        <end position="204"/>
    </location>
</feature>
<evidence type="ECO:0000255" key="1">
    <source>
        <dbReference type="HAMAP-Rule" id="MF_00144"/>
    </source>
</evidence>
<dbReference type="EC" id="2.8.1.13" evidence="1"/>
<dbReference type="EMBL" id="CP000304">
    <property type="protein sequence ID" value="ABP79963.1"/>
    <property type="molecule type" value="Genomic_DNA"/>
</dbReference>
<dbReference type="RefSeq" id="WP_011913429.1">
    <property type="nucleotide sequence ID" value="NC_009434.1"/>
</dbReference>
<dbReference type="SMR" id="A4VLW2"/>
<dbReference type="KEGG" id="psa:PST_2304"/>
<dbReference type="eggNOG" id="COG0482">
    <property type="taxonomic scope" value="Bacteria"/>
</dbReference>
<dbReference type="HOGENOM" id="CLU_035188_1_0_6"/>
<dbReference type="Proteomes" id="UP000000233">
    <property type="component" value="Chromosome"/>
</dbReference>
<dbReference type="GO" id="GO:0005737">
    <property type="term" value="C:cytoplasm"/>
    <property type="evidence" value="ECO:0007669"/>
    <property type="project" value="UniProtKB-SubCell"/>
</dbReference>
<dbReference type="GO" id="GO:0005524">
    <property type="term" value="F:ATP binding"/>
    <property type="evidence" value="ECO:0007669"/>
    <property type="project" value="UniProtKB-KW"/>
</dbReference>
<dbReference type="GO" id="GO:0000049">
    <property type="term" value="F:tRNA binding"/>
    <property type="evidence" value="ECO:0007669"/>
    <property type="project" value="UniProtKB-KW"/>
</dbReference>
<dbReference type="GO" id="GO:0103016">
    <property type="term" value="F:tRNA-uridine 2-sulfurtransferase activity"/>
    <property type="evidence" value="ECO:0007669"/>
    <property type="project" value="UniProtKB-EC"/>
</dbReference>
<dbReference type="GO" id="GO:0002143">
    <property type="term" value="P:tRNA wobble position uridine thiolation"/>
    <property type="evidence" value="ECO:0007669"/>
    <property type="project" value="TreeGrafter"/>
</dbReference>
<dbReference type="CDD" id="cd01998">
    <property type="entry name" value="MnmA_TRMU-like"/>
    <property type="match status" value="1"/>
</dbReference>
<dbReference type="FunFam" id="2.30.30.280:FF:000001">
    <property type="entry name" value="tRNA-specific 2-thiouridylase MnmA"/>
    <property type="match status" value="1"/>
</dbReference>
<dbReference type="FunFam" id="2.40.30.10:FF:000023">
    <property type="entry name" value="tRNA-specific 2-thiouridylase MnmA"/>
    <property type="match status" value="1"/>
</dbReference>
<dbReference type="FunFam" id="3.40.50.620:FF:000004">
    <property type="entry name" value="tRNA-specific 2-thiouridylase MnmA"/>
    <property type="match status" value="1"/>
</dbReference>
<dbReference type="Gene3D" id="2.30.30.280">
    <property type="entry name" value="Adenine nucleotide alpha hydrolases-like domains"/>
    <property type="match status" value="1"/>
</dbReference>
<dbReference type="Gene3D" id="3.40.50.620">
    <property type="entry name" value="HUPs"/>
    <property type="match status" value="1"/>
</dbReference>
<dbReference type="Gene3D" id="2.40.30.10">
    <property type="entry name" value="Translation factors"/>
    <property type="match status" value="1"/>
</dbReference>
<dbReference type="HAMAP" id="MF_00144">
    <property type="entry name" value="tRNA_thiouridyl_MnmA"/>
    <property type="match status" value="1"/>
</dbReference>
<dbReference type="InterPro" id="IPR004506">
    <property type="entry name" value="MnmA-like"/>
</dbReference>
<dbReference type="InterPro" id="IPR046885">
    <property type="entry name" value="MnmA-like_C"/>
</dbReference>
<dbReference type="InterPro" id="IPR046884">
    <property type="entry name" value="MnmA-like_central"/>
</dbReference>
<dbReference type="InterPro" id="IPR023382">
    <property type="entry name" value="MnmA-like_central_sf"/>
</dbReference>
<dbReference type="InterPro" id="IPR014729">
    <property type="entry name" value="Rossmann-like_a/b/a_fold"/>
</dbReference>
<dbReference type="NCBIfam" id="NF001138">
    <property type="entry name" value="PRK00143.1"/>
    <property type="match status" value="1"/>
</dbReference>
<dbReference type="NCBIfam" id="TIGR00420">
    <property type="entry name" value="trmU"/>
    <property type="match status" value="1"/>
</dbReference>
<dbReference type="PANTHER" id="PTHR11933:SF5">
    <property type="entry name" value="MITOCHONDRIAL TRNA-SPECIFIC 2-THIOURIDYLASE 1"/>
    <property type="match status" value="1"/>
</dbReference>
<dbReference type="PANTHER" id="PTHR11933">
    <property type="entry name" value="TRNA 5-METHYLAMINOMETHYL-2-THIOURIDYLATE -METHYLTRANSFERASE"/>
    <property type="match status" value="1"/>
</dbReference>
<dbReference type="Pfam" id="PF03054">
    <property type="entry name" value="tRNA_Me_trans"/>
    <property type="match status" value="1"/>
</dbReference>
<dbReference type="Pfam" id="PF20258">
    <property type="entry name" value="tRNA_Me_trans_C"/>
    <property type="match status" value="1"/>
</dbReference>
<dbReference type="Pfam" id="PF20259">
    <property type="entry name" value="tRNA_Me_trans_M"/>
    <property type="match status" value="1"/>
</dbReference>
<dbReference type="SUPFAM" id="SSF52402">
    <property type="entry name" value="Adenine nucleotide alpha hydrolases-like"/>
    <property type="match status" value="1"/>
</dbReference>
<name>MNMA_STUS1</name>
<sequence length="375" mass="41620">MSVATLSAPEKTRVIVGMSGGVDSSVSALLLLEQGYQVEGLFMKNWEEDDGTEYCTAKEDLADAQAVCDRIGIKLHTANFAAEYWDNVFEHFLAEYKAGRTPNPDILCNREIKFKAFLDYALMLGADLIATGHYVRRRDRDGRSELLKGLDPNKDQSYFLHAVGGEQLAKTLFPVGELEKPEVRAIAEKHSLATAKKKDSTGICFIGERRFSDFLKQYLPAQPGNIEAVDGEVIGRHHGLMYHTIGQRQGLGIGGLKDASDEPWYVLSKDLQRNVLIVGQGNDHPWLFSRALLASEIYWVNPVDLSAPLKLTAKVRYRQSDQACTLEQTSDGYRAVFEVPQRAVTPGQSVVFYDGEVCLGGGVIEQAEPWFEGRA</sequence>
<protein>
    <recommendedName>
        <fullName evidence="1">tRNA-specific 2-thiouridylase MnmA</fullName>
        <ecNumber evidence="1">2.8.1.13</ecNumber>
    </recommendedName>
</protein>